<proteinExistence type="predicted"/>
<reference key="1">
    <citation type="journal article" date="1994" name="Plant Mol. Biol.">
        <title>A protein involved in co-ordinated regulation of inorganic carbon and glucose metabolism in the facultative photoautotrophic cyanobacterium Synechocystis PCC6803.</title>
        <authorList>
            <person name="Beuf L."/>
            <person name="Bedu S."/>
            <person name="Durand M.C."/>
            <person name="Joset F."/>
        </authorList>
    </citation>
    <scope>NUCLEOTIDE SEQUENCE [GENOMIC DNA]</scope>
</reference>
<reference key="2">
    <citation type="journal article" date="1996" name="DNA Res.">
        <title>Sequence analysis of the genome of the unicellular cyanobacterium Synechocystis sp. strain PCC6803. II. Sequence determination of the entire genome and assignment of potential protein-coding regions.</title>
        <authorList>
            <person name="Kaneko T."/>
            <person name="Sato S."/>
            <person name="Kotani H."/>
            <person name="Tanaka A."/>
            <person name="Asamizu E."/>
            <person name="Nakamura Y."/>
            <person name="Miyajima N."/>
            <person name="Hirosawa M."/>
            <person name="Sugiura M."/>
            <person name="Sasamoto S."/>
            <person name="Kimura T."/>
            <person name="Hosouchi T."/>
            <person name="Matsuno A."/>
            <person name="Muraki A."/>
            <person name="Nakazaki N."/>
            <person name="Naruo K."/>
            <person name="Okumura S."/>
            <person name="Shimpo S."/>
            <person name="Takeuchi C."/>
            <person name="Wada T."/>
            <person name="Watanabe A."/>
            <person name="Yamada M."/>
            <person name="Yasuda M."/>
            <person name="Tabata S."/>
        </authorList>
    </citation>
    <scope>NUCLEOTIDE SEQUENCE [LARGE SCALE GENOMIC DNA]</scope>
    <source>
        <strain>ATCC 27184 / PCC 6803 / Kazusa</strain>
    </source>
</reference>
<name>ICFG_SYNY3</name>
<feature type="chain" id="PRO_0000057792" description="Protein IcfG">
    <location>
        <begin position="1"/>
        <end position="634"/>
    </location>
</feature>
<feature type="domain" description="HAMP" evidence="1">
    <location>
        <begin position="306"/>
        <end position="361"/>
    </location>
</feature>
<feature type="domain" description="PPM-type phosphatase" evidence="2">
    <location>
        <begin position="385"/>
        <end position="633"/>
    </location>
</feature>
<feature type="sequence conflict" description="In Ref. 1; CAA53246." evidence="3" ref="1">
    <original>KASQAIAAGDLDYEI</original>
    <variation>EGFPSDRRGRFRLLKL</variation>
    <location>
        <begin position="317"/>
        <end position="331"/>
    </location>
</feature>
<feature type="sequence conflict" description="In Ref. 1; CAA53246." evidence="3" ref="1">
    <original>LIAQEV</original>
    <variation>HDSSGS</variation>
    <location>
        <begin position="359"/>
        <end position="364"/>
    </location>
</feature>
<feature type="sequence conflict" description="In Ref. 1; CAA53246." evidence="3" ref="1">
    <original>KGR</original>
    <variation>QGRRVQ</variation>
    <location>
        <begin position="375"/>
        <end position="377"/>
    </location>
</feature>
<feature type="sequence conflict" description="In Ref. 1; CAA53246." evidence="3" ref="1">
    <original>IV</original>
    <variation>MS</variation>
    <location>
        <begin position="423"/>
        <end position="424"/>
    </location>
</feature>
<protein>
    <recommendedName>
        <fullName>Protein IcfG</fullName>
    </recommendedName>
</protein>
<dbReference type="EMBL" id="X75568">
    <property type="protein sequence ID" value="CAA53246.1"/>
    <property type="molecule type" value="Genomic_DNA"/>
</dbReference>
<dbReference type="EMBL" id="BA000022">
    <property type="protein sequence ID" value="BAA17654.1"/>
    <property type="molecule type" value="Genomic_DNA"/>
</dbReference>
<dbReference type="PIR" id="S77096">
    <property type="entry name" value="S77096"/>
</dbReference>
<dbReference type="SMR" id="P37979"/>
<dbReference type="FunCoup" id="P37979">
    <property type="interactions" value="65"/>
</dbReference>
<dbReference type="IntAct" id="P37979">
    <property type="interactions" value="1"/>
</dbReference>
<dbReference type="STRING" id="1148.gene:10498521"/>
<dbReference type="PaxDb" id="1148-1652735"/>
<dbReference type="EnsemblBacteria" id="BAA17654">
    <property type="protein sequence ID" value="BAA17654"/>
    <property type="gene ID" value="BAA17654"/>
</dbReference>
<dbReference type="KEGG" id="syn:slr1860"/>
<dbReference type="eggNOG" id="COG2208">
    <property type="taxonomic scope" value="Bacteria"/>
</dbReference>
<dbReference type="eggNOG" id="COG2770">
    <property type="taxonomic scope" value="Bacteria"/>
</dbReference>
<dbReference type="InParanoid" id="P37979"/>
<dbReference type="PhylomeDB" id="P37979"/>
<dbReference type="BRENDA" id="3.1.3.16">
    <property type="organism ID" value="6192"/>
</dbReference>
<dbReference type="Proteomes" id="UP000001425">
    <property type="component" value="Chromosome"/>
</dbReference>
<dbReference type="GO" id="GO:0016020">
    <property type="term" value="C:membrane"/>
    <property type="evidence" value="ECO:0007669"/>
    <property type="project" value="InterPro"/>
</dbReference>
<dbReference type="GO" id="GO:0016791">
    <property type="term" value="F:phosphatase activity"/>
    <property type="evidence" value="ECO:0000318"/>
    <property type="project" value="GO_Central"/>
</dbReference>
<dbReference type="GO" id="GO:0007165">
    <property type="term" value="P:signal transduction"/>
    <property type="evidence" value="ECO:0007669"/>
    <property type="project" value="InterPro"/>
</dbReference>
<dbReference type="CDD" id="cd06225">
    <property type="entry name" value="HAMP"/>
    <property type="match status" value="1"/>
</dbReference>
<dbReference type="Gene3D" id="6.10.340.10">
    <property type="match status" value="1"/>
</dbReference>
<dbReference type="Gene3D" id="3.60.40.10">
    <property type="entry name" value="PPM-type phosphatase domain"/>
    <property type="match status" value="1"/>
</dbReference>
<dbReference type="InterPro" id="IPR052016">
    <property type="entry name" value="Bact_Sigma-Reg"/>
</dbReference>
<dbReference type="InterPro" id="IPR003660">
    <property type="entry name" value="HAMP_dom"/>
</dbReference>
<dbReference type="InterPro" id="IPR036457">
    <property type="entry name" value="PPM-type-like_dom_sf"/>
</dbReference>
<dbReference type="InterPro" id="IPR001932">
    <property type="entry name" value="PPM-type_phosphatase-like_dom"/>
</dbReference>
<dbReference type="PANTHER" id="PTHR43156:SF2">
    <property type="entry name" value="STAGE II SPORULATION PROTEIN E"/>
    <property type="match status" value="1"/>
</dbReference>
<dbReference type="PANTHER" id="PTHR43156">
    <property type="entry name" value="STAGE II SPORULATION PROTEIN E-RELATED"/>
    <property type="match status" value="1"/>
</dbReference>
<dbReference type="Pfam" id="PF00672">
    <property type="entry name" value="HAMP"/>
    <property type="match status" value="1"/>
</dbReference>
<dbReference type="Pfam" id="PF07228">
    <property type="entry name" value="SpoIIE"/>
    <property type="match status" value="1"/>
</dbReference>
<dbReference type="SMART" id="SM00304">
    <property type="entry name" value="HAMP"/>
    <property type="match status" value="1"/>
</dbReference>
<dbReference type="SMART" id="SM00331">
    <property type="entry name" value="PP2C_SIG"/>
    <property type="match status" value="1"/>
</dbReference>
<dbReference type="SUPFAM" id="SSF158472">
    <property type="entry name" value="HAMP domain-like"/>
    <property type="match status" value="1"/>
</dbReference>
<dbReference type="SUPFAM" id="SSF81606">
    <property type="entry name" value="PP2C-like"/>
    <property type="match status" value="1"/>
</dbReference>
<dbReference type="PROSITE" id="PS50885">
    <property type="entry name" value="HAMP"/>
    <property type="match status" value="1"/>
</dbReference>
<dbReference type="PROSITE" id="PS51746">
    <property type="entry name" value="PPM_2"/>
    <property type="match status" value="1"/>
</dbReference>
<accession>P37979</accession>
<accession>P73610</accession>
<comment type="function">
    <text>Involved in cross-regulation of inorganic carbon and glucose metabolisms.</text>
</comment>
<organism>
    <name type="scientific">Synechocystis sp. (strain ATCC 27184 / PCC 6803 / Kazusa)</name>
    <dbReference type="NCBI Taxonomy" id="1111708"/>
    <lineage>
        <taxon>Bacteria</taxon>
        <taxon>Bacillati</taxon>
        <taxon>Cyanobacteriota</taxon>
        <taxon>Cyanophyceae</taxon>
        <taxon>Synechococcales</taxon>
        <taxon>Merismopediaceae</taxon>
        <taxon>Synechocystis</taxon>
    </lineage>
</organism>
<evidence type="ECO:0000255" key="1">
    <source>
        <dbReference type="PROSITE-ProRule" id="PRU00102"/>
    </source>
</evidence>
<evidence type="ECO:0000255" key="2">
    <source>
        <dbReference type="PROSITE-ProRule" id="PRU01082"/>
    </source>
</evidence>
<evidence type="ECO:0000305" key="3"/>
<sequence length="634" mass="70962">MKMKLIQPFIQSIRFRIVGLLLLCLIPPTLGGIFLIDSYTGRQLKKIAEQDLQSRARLIIQLISRSDRERQQSTAFVASQPAIVEFNVEASQYFLNEFIKFHQWNGFFVVANQEGELVAGSDGANQEKGLPLKHWFEEVKDKNRHLNRLFPGKTYAESKDCLIVPIHSKNDQTQIGIVVECIPLPVIADFVQKILKDAELERILLVNYEGYIYADTDFKNYGVLENKKKSPLVNRLLNDQSGFVYSQGKFSYLSPVHLRGAKTWGLIVENSESDIQAAILNVNRIGYLLVLVIGGIVAYASWMVIHHSTVPILDLTKASQAIAAGDLDYEININQGNRQDEIGILGNSFIYMKNQIKTLIAQEVKDGVNRLELEKGRQIQQNFLPISLPDLQQWQINAVFEPARSVSGDFYDAFLLGDDYLAIVIGDVCDKGVGAAMFMGLFRSLLRVFSGETMPGDTCIRDVNYKCSANDGNGKKKVIVQFLNAVRLTNDYIATEHGDMAMFATLFFGVIDISNGNLSYINAGHEPVFILNSEGIKHRLKSTGPAVGMMPNSTFTIDSLKIDPGEMLIGYTDGVTDARSPTKEFFGRQRLMETLTANFSAKTEILDIIKQELIGHIDGSIQFDDITMIAVYRN</sequence>
<keyword id="KW-0378">Hydrolase</keyword>
<keyword id="KW-1185">Reference proteome</keyword>
<gene>
    <name type="primary">icfG</name>
    <name type="ordered locus">slr1860</name>
</gene>